<accession>P35723</accession>
<accession>D6VXM2</accession>
<accession>Q6Q5G9</accession>
<gene>
    <name type="primary">YET1</name>
    <name type="ordered locus">YKL065C</name>
    <name type="ORF">YKL331</name>
</gene>
<dbReference type="EMBL" id="X75781">
    <property type="protein sequence ID" value="CAA53409.1"/>
    <property type="molecule type" value="Genomic_DNA"/>
</dbReference>
<dbReference type="EMBL" id="Z28065">
    <property type="protein sequence ID" value="CAA81902.1"/>
    <property type="molecule type" value="Genomic_DNA"/>
</dbReference>
<dbReference type="EMBL" id="AY558075">
    <property type="protein sequence ID" value="AAS56401.1"/>
    <property type="molecule type" value="Genomic_DNA"/>
</dbReference>
<dbReference type="EMBL" id="BK006944">
    <property type="protein sequence ID" value="DAA09092.2"/>
    <property type="molecule type" value="Genomic_DNA"/>
</dbReference>
<dbReference type="PIR" id="S37887">
    <property type="entry name" value="S37887"/>
</dbReference>
<dbReference type="RefSeq" id="NP_012858.2">
    <property type="nucleotide sequence ID" value="NM_001179631.2"/>
</dbReference>
<dbReference type="SMR" id="P35723"/>
<dbReference type="BioGRID" id="34068">
    <property type="interactions" value="164"/>
</dbReference>
<dbReference type="DIP" id="DIP-7996N"/>
<dbReference type="FunCoup" id="P35723">
    <property type="interactions" value="187"/>
</dbReference>
<dbReference type="IntAct" id="P35723">
    <property type="interactions" value="53"/>
</dbReference>
<dbReference type="MINT" id="P35723"/>
<dbReference type="STRING" id="4932.YKL065C"/>
<dbReference type="iPTMnet" id="P35723"/>
<dbReference type="PaxDb" id="4932-YKL065C"/>
<dbReference type="PeptideAtlas" id="P35723"/>
<dbReference type="EnsemblFungi" id="YKL065C_mRNA">
    <property type="protein sequence ID" value="YKL065C"/>
    <property type="gene ID" value="YKL065C"/>
</dbReference>
<dbReference type="GeneID" id="853800"/>
<dbReference type="KEGG" id="sce:YKL065C"/>
<dbReference type="AGR" id="SGD:S000001548"/>
<dbReference type="SGD" id="S000001548">
    <property type="gene designation" value="YET1"/>
</dbReference>
<dbReference type="VEuPathDB" id="FungiDB:YKL065C"/>
<dbReference type="eggNOG" id="KOG1962">
    <property type="taxonomic scope" value="Eukaryota"/>
</dbReference>
<dbReference type="GeneTree" id="ENSGT00390000011863"/>
<dbReference type="HOGENOM" id="CLU_087648_1_0_1"/>
<dbReference type="InParanoid" id="P35723"/>
<dbReference type="OMA" id="QRNMYIS"/>
<dbReference type="OrthoDB" id="435607at2759"/>
<dbReference type="BioCyc" id="YEAST:G3O-31863-MONOMER"/>
<dbReference type="BioGRID-ORCS" id="853800">
    <property type="hits" value="0 hits in 10 CRISPR screens"/>
</dbReference>
<dbReference type="PRO" id="PR:P35723"/>
<dbReference type="Proteomes" id="UP000002311">
    <property type="component" value="Chromosome XI"/>
</dbReference>
<dbReference type="RNAct" id="P35723">
    <property type="molecule type" value="protein"/>
</dbReference>
<dbReference type="GO" id="GO:0005783">
    <property type="term" value="C:endoplasmic reticulum"/>
    <property type="evidence" value="ECO:0000314"/>
    <property type="project" value="SGD"/>
</dbReference>
<dbReference type="GO" id="GO:0005789">
    <property type="term" value="C:endoplasmic reticulum membrane"/>
    <property type="evidence" value="ECO:0000318"/>
    <property type="project" value="GO_Central"/>
</dbReference>
<dbReference type="GO" id="GO:0006888">
    <property type="term" value="P:endoplasmic reticulum to Golgi vesicle-mediated transport"/>
    <property type="evidence" value="ECO:0000318"/>
    <property type="project" value="GO_Central"/>
</dbReference>
<dbReference type="GO" id="GO:0006886">
    <property type="term" value="P:intracellular protein transport"/>
    <property type="evidence" value="ECO:0007669"/>
    <property type="project" value="InterPro"/>
</dbReference>
<dbReference type="GO" id="GO:0070973">
    <property type="term" value="P:protein localization to endoplasmic reticulum exit site"/>
    <property type="evidence" value="ECO:0000318"/>
    <property type="project" value="GO_Central"/>
</dbReference>
<dbReference type="InterPro" id="IPR008417">
    <property type="entry name" value="BAP29/BAP31"/>
</dbReference>
<dbReference type="InterPro" id="IPR040463">
    <property type="entry name" value="BAP29/BAP31_N"/>
</dbReference>
<dbReference type="PANTHER" id="PTHR12701">
    <property type="entry name" value="BCR-ASSOCIATED PROTEIN, BAP"/>
    <property type="match status" value="1"/>
</dbReference>
<dbReference type="PANTHER" id="PTHR12701:SF19">
    <property type="entry name" value="ENDOPLASMIC RETICULUM TRANSMEMBRANE PROTEIN 1-RELATED"/>
    <property type="match status" value="1"/>
</dbReference>
<dbReference type="Pfam" id="PF05529">
    <property type="entry name" value="Bap31"/>
    <property type="match status" value="1"/>
</dbReference>
<keyword id="KW-0256">Endoplasmic reticulum</keyword>
<keyword id="KW-0931">ER-Golgi transport</keyword>
<keyword id="KW-1017">Isopeptide bond</keyword>
<keyword id="KW-0472">Membrane</keyword>
<keyword id="KW-0653">Protein transport</keyword>
<keyword id="KW-1185">Reference proteome</keyword>
<keyword id="KW-0812">Transmembrane</keyword>
<keyword id="KW-1133">Transmembrane helix</keyword>
<keyword id="KW-0813">Transport</keyword>
<keyword id="KW-0832">Ubl conjugation</keyword>
<reference key="1">
    <citation type="journal article" date="1994" name="Yeast">
        <title>Sequence of a 28.6 kb region of yeast chromosome XI includes the FBA1 and TOA2 genes, an open reading frame (ORF) similar to a translationally controlled tumour protein, one ORF containing motifs also found in plant storage proteins and 13 ORFs with weak or no homology to known proteins.</title>
        <authorList>
            <person name="Rasmussen S.W."/>
        </authorList>
    </citation>
    <scope>NUCLEOTIDE SEQUENCE [GENOMIC DNA]</scope>
    <source>
        <strain>ATCC 204508 / S288c</strain>
    </source>
</reference>
<reference key="2">
    <citation type="journal article" date="1994" name="Nature">
        <title>Complete DNA sequence of yeast chromosome XI.</title>
        <authorList>
            <person name="Dujon B."/>
            <person name="Alexandraki D."/>
            <person name="Andre B."/>
            <person name="Ansorge W."/>
            <person name="Baladron V."/>
            <person name="Ballesta J.P.G."/>
            <person name="Banrevi A."/>
            <person name="Bolle P.-A."/>
            <person name="Bolotin-Fukuhara M."/>
            <person name="Bossier P."/>
            <person name="Bou G."/>
            <person name="Boyer J."/>
            <person name="Buitrago M.J."/>
            <person name="Cheret G."/>
            <person name="Colleaux L."/>
            <person name="Daignan-Fornier B."/>
            <person name="del Rey F."/>
            <person name="Dion C."/>
            <person name="Domdey H."/>
            <person name="Duesterhoeft A."/>
            <person name="Duesterhus S."/>
            <person name="Entian K.-D."/>
            <person name="Erfle H."/>
            <person name="Esteban P.F."/>
            <person name="Feldmann H."/>
            <person name="Fernandes L."/>
            <person name="Fobo G.M."/>
            <person name="Fritz C."/>
            <person name="Fukuhara H."/>
            <person name="Gabel C."/>
            <person name="Gaillon L."/>
            <person name="Garcia-Cantalejo J.M."/>
            <person name="Garcia-Ramirez J.J."/>
            <person name="Gent M.E."/>
            <person name="Ghazvini M."/>
            <person name="Goffeau A."/>
            <person name="Gonzalez A."/>
            <person name="Grothues D."/>
            <person name="Guerreiro P."/>
            <person name="Hegemann J.H."/>
            <person name="Hewitt N."/>
            <person name="Hilger F."/>
            <person name="Hollenberg C.P."/>
            <person name="Horaitis O."/>
            <person name="Indge K.J."/>
            <person name="Jacquier A."/>
            <person name="James C.M."/>
            <person name="Jauniaux J.-C."/>
            <person name="Jimenez A."/>
            <person name="Keuchel H."/>
            <person name="Kirchrath L."/>
            <person name="Kleine K."/>
            <person name="Koetter P."/>
            <person name="Legrain P."/>
            <person name="Liebl S."/>
            <person name="Louis E.J."/>
            <person name="Maia e Silva A."/>
            <person name="Marck C."/>
            <person name="Monnier A.-L."/>
            <person name="Moestl D."/>
            <person name="Mueller S."/>
            <person name="Obermaier B."/>
            <person name="Oliver S.G."/>
            <person name="Pallier C."/>
            <person name="Pascolo S."/>
            <person name="Pfeiffer F."/>
            <person name="Philippsen P."/>
            <person name="Planta R.J."/>
            <person name="Pohl F.M."/>
            <person name="Pohl T.M."/>
            <person name="Poehlmann R."/>
            <person name="Portetelle D."/>
            <person name="Purnelle B."/>
            <person name="Puzos V."/>
            <person name="Ramezani Rad M."/>
            <person name="Rasmussen S.W."/>
            <person name="Remacha M.A."/>
            <person name="Revuelta J.L."/>
            <person name="Richard G.-F."/>
            <person name="Rieger M."/>
            <person name="Rodrigues-Pousada C."/>
            <person name="Rose M."/>
            <person name="Rupp T."/>
            <person name="Santos M.A."/>
            <person name="Schwager C."/>
            <person name="Sensen C."/>
            <person name="Skala J."/>
            <person name="Soares H."/>
            <person name="Sor F."/>
            <person name="Stegemann J."/>
            <person name="Tettelin H."/>
            <person name="Thierry A."/>
            <person name="Tzermia M."/>
            <person name="Urrestarazu L.A."/>
            <person name="van Dyck L."/>
            <person name="van Vliet-Reedijk J.C."/>
            <person name="Valens M."/>
            <person name="Vandenbol M."/>
            <person name="Vilela C."/>
            <person name="Vissers S."/>
            <person name="von Wettstein D."/>
            <person name="Voss H."/>
            <person name="Wiemann S."/>
            <person name="Xu G."/>
            <person name="Zimmermann J."/>
            <person name="Haasemann M."/>
            <person name="Becker I."/>
            <person name="Mewes H.-W."/>
        </authorList>
    </citation>
    <scope>NUCLEOTIDE SEQUENCE [LARGE SCALE GENOMIC DNA]</scope>
    <source>
        <strain>ATCC 204508 / S288c</strain>
    </source>
</reference>
<reference key="3">
    <citation type="journal article" date="2014" name="G3 (Bethesda)">
        <title>The reference genome sequence of Saccharomyces cerevisiae: Then and now.</title>
        <authorList>
            <person name="Engel S.R."/>
            <person name="Dietrich F.S."/>
            <person name="Fisk D.G."/>
            <person name="Binkley G."/>
            <person name="Balakrishnan R."/>
            <person name="Costanzo M.C."/>
            <person name="Dwight S.S."/>
            <person name="Hitz B.C."/>
            <person name="Karra K."/>
            <person name="Nash R.S."/>
            <person name="Weng S."/>
            <person name="Wong E.D."/>
            <person name="Lloyd P."/>
            <person name="Skrzypek M.S."/>
            <person name="Miyasato S.R."/>
            <person name="Simison M."/>
            <person name="Cherry J.M."/>
        </authorList>
    </citation>
    <scope>GENOME REANNOTATION</scope>
    <scope>SEQUENCE REVISION TO 16</scope>
    <source>
        <strain>ATCC 204508 / S288c</strain>
    </source>
</reference>
<reference key="4">
    <citation type="journal article" date="2007" name="Genome Res.">
        <title>Approaching a complete repository of sequence-verified protein-encoding clones for Saccharomyces cerevisiae.</title>
        <authorList>
            <person name="Hu Y."/>
            <person name="Rolfs A."/>
            <person name="Bhullar B."/>
            <person name="Murthy T.V.S."/>
            <person name="Zhu C."/>
            <person name="Berger M.F."/>
            <person name="Camargo A.A."/>
            <person name="Kelley F."/>
            <person name="McCarron S."/>
            <person name="Jepson D."/>
            <person name="Richardson A."/>
            <person name="Raphael J."/>
            <person name="Moreira D."/>
            <person name="Taycher E."/>
            <person name="Zuo D."/>
            <person name="Mohr S."/>
            <person name="Kane M.F."/>
            <person name="Williamson J."/>
            <person name="Simpson A.J.G."/>
            <person name="Bulyk M.L."/>
            <person name="Harlow E."/>
            <person name="Marsischky G."/>
            <person name="Kolodner R.D."/>
            <person name="LaBaer J."/>
        </authorList>
    </citation>
    <scope>NUCLEOTIDE SEQUENCE [GENOMIC DNA]</scope>
    <source>
        <strain>ATCC 204508 / S288c</strain>
    </source>
</reference>
<reference key="5">
    <citation type="journal article" date="2003" name="Nature">
        <title>Global analysis of protein localization in budding yeast.</title>
        <authorList>
            <person name="Huh W.-K."/>
            <person name="Falvo J.V."/>
            <person name="Gerke L.C."/>
            <person name="Carroll A.S."/>
            <person name="Howson R.W."/>
            <person name="Weissman J.S."/>
            <person name="O'Shea E.K."/>
        </authorList>
    </citation>
    <scope>SUBCELLULAR LOCATION [LARGE SCALE ANALYSIS]</scope>
</reference>
<reference key="6">
    <citation type="journal article" date="2003" name="Nature">
        <title>Global analysis of protein expression in yeast.</title>
        <authorList>
            <person name="Ghaemmaghami S."/>
            <person name="Huh W.-K."/>
            <person name="Bower K."/>
            <person name="Howson R.W."/>
            <person name="Belle A."/>
            <person name="Dephoure N."/>
            <person name="O'Shea E.K."/>
            <person name="Weissman J.S."/>
        </authorList>
    </citation>
    <scope>LEVEL OF PROTEIN EXPRESSION [LARGE SCALE ANALYSIS]</scope>
</reference>
<reference key="7">
    <citation type="journal article" date="2003" name="Proc. Natl. Acad. Sci. U.S.A.">
        <title>A subset of membrane-associated proteins is ubiquitinated in response to mutations in the endoplasmic reticulum degradation machinery.</title>
        <authorList>
            <person name="Hitchcock A.L."/>
            <person name="Auld K."/>
            <person name="Gygi S.P."/>
            <person name="Silver P.A."/>
        </authorList>
    </citation>
    <scope>UBIQUITINATION [LARGE SCALE ANALYSIS] AT LYS-190</scope>
    <scope>IDENTIFICATION BY MASS SPECTROMETRY</scope>
</reference>
<reference key="8">
    <citation type="journal article" date="2006" name="J. Biol. Sci. (Faisalabad)">
        <title>YET1, YET2 and YET3 of Saccharomyces cerevisiae encode BAP31 homologs with partially overlapping functions.</title>
        <authorList>
            <person name="Toikkanen J.H."/>
            <person name="Fatal N."/>
            <person name="Hilden P."/>
            <person name="Makarow M."/>
            <person name="Kuismanen E."/>
        </authorList>
    </citation>
    <scope>FUNCTION</scope>
    <scope>SUBCELLULAR LOCATION</scope>
</reference>
<reference key="9">
    <citation type="journal article" date="2006" name="Proc. Natl. Acad. Sci. U.S.A.">
        <title>A global topology map of the Saccharomyces cerevisiae membrane proteome.</title>
        <authorList>
            <person name="Kim H."/>
            <person name="Melen K."/>
            <person name="Oesterberg M."/>
            <person name="von Heijne G."/>
        </authorList>
    </citation>
    <scope>TOPOLOGY [LARGE SCALE ANALYSIS]</scope>
    <source>
        <strain>ATCC 208353 / W303-1A</strain>
    </source>
</reference>
<feature type="chain" id="PRO_0000203174" description="Endoplasmic reticulum transmembrane protein 1">
    <location>
        <begin position="1"/>
        <end position="206"/>
    </location>
</feature>
<feature type="topological domain" description="Lumenal" evidence="2">
    <location>
        <begin position="1"/>
        <end position="7"/>
    </location>
</feature>
<feature type="transmembrane region" description="Helical" evidence="2">
    <location>
        <begin position="8"/>
        <end position="28"/>
    </location>
</feature>
<feature type="topological domain" description="Cytoplasmic" evidence="2">
    <location>
        <begin position="29"/>
        <end position="45"/>
    </location>
</feature>
<feature type="transmembrane region" description="Helical" evidence="2">
    <location>
        <begin position="46"/>
        <end position="66"/>
    </location>
</feature>
<feature type="topological domain" description="Lumenal" evidence="2">
    <location>
        <begin position="67"/>
        <end position="104"/>
    </location>
</feature>
<feature type="transmembrane region" description="Helical" evidence="2">
    <location>
        <begin position="105"/>
        <end position="125"/>
    </location>
</feature>
<feature type="topological domain" description="Cytoplasmic" evidence="2">
    <location>
        <begin position="126"/>
        <end position="206"/>
    </location>
</feature>
<feature type="region of interest" description="Disordered" evidence="3">
    <location>
        <begin position="140"/>
        <end position="163"/>
    </location>
</feature>
<feature type="short sequence motif" description="Di-lysine motif">
    <location>
        <begin position="203"/>
        <end position="206"/>
    </location>
</feature>
<feature type="compositionally biased region" description="Basic and acidic residues" evidence="3">
    <location>
        <begin position="150"/>
        <end position="163"/>
    </location>
</feature>
<feature type="cross-link" description="Glycyl lysine isopeptide (Lys-Gly) (interchain with G-Cter in ubiquitin)" evidence="4">
    <location>
        <position position="190"/>
    </location>
</feature>
<feature type="sequence conflict" description="In Ref. 1; CAA53409, 2; CAA81902 and 4; AAS56401." evidence="8" ref="1 2 4">
    <original>M</original>
    <variation>V</variation>
    <location>
        <position position="16"/>
    </location>
</feature>
<protein>
    <recommendedName>
        <fullName>Endoplasmic reticulum transmembrane protein 1</fullName>
    </recommendedName>
</protein>
<sequence>MSLYFTTLFLLLTVEMVMLFIFVLPLPFRIRRGIFSTYNQLTAKQQIKTIIFITGCLVGLLFIDSWKRSQIRVSLYHNDNSGSIGSSAVTPIQALASRAYNQRNMYISGFILYFSICIPTVMSIVKRLVKYQGLINEQEKQKLNKPSSNSKKDSNEADSTKLQEELRKKQISLEGLQKQVKNLEKYFDEKNQPGNVAAAEASKKGN</sequence>
<organism>
    <name type="scientific">Saccharomyces cerevisiae (strain ATCC 204508 / S288c)</name>
    <name type="common">Baker's yeast</name>
    <dbReference type="NCBI Taxonomy" id="559292"/>
    <lineage>
        <taxon>Eukaryota</taxon>
        <taxon>Fungi</taxon>
        <taxon>Dikarya</taxon>
        <taxon>Ascomycota</taxon>
        <taxon>Saccharomycotina</taxon>
        <taxon>Saccharomycetes</taxon>
        <taxon>Saccharomycetales</taxon>
        <taxon>Saccharomycetaceae</taxon>
        <taxon>Saccharomyces</taxon>
    </lineage>
</organism>
<proteinExistence type="evidence at protein level"/>
<evidence type="ECO:0000250" key="1"/>
<evidence type="ECO:0000255" key="2"/>
<evidence type="ECO:0000256" key="3">
    <source>
        <dbReference type="SAM" id="MobiDB-lite"/>
    </source>
</evidence>
<evidence type="ECO:0000269" key="4">
    <source>
    </source>
</evidence>
<evidence type="ECO:0000269" key="5">
    <source>
    </source>
</evidence>
<evidence type="ECO:0000269" key="6">
    <source>
    </source>
</evidence>
<evidence type="ECO:0000269" key="7">
    <source ref="8"/>
</evidence>
<evidence type="ECO:0000305" key="8"/>
<name>YET1_YEAST</name>
<comment type="function">
    <text evidence="7">May play a role in anterograde transport of membrane proteins from the endoplasmic reticulum to the Golgi.</text>
</comment>
<comment type="subcellular location">
    <subcellularLocation>
        <location evidence="5 7">Endoplasmic reticulum membrane</location>
        <topology evidence="5 7">Multi-pass membrane protein</topology>
    </subcellularLocation>
</comment>
<comment type="domain">
    <text evidence="1">The di-lysine motif confers endoplasmic reticulum localization for type I membrane proteins.</text>
</comment>
<comment type="miscellaneous">
    <text evidence="6">Present with 7210 molecules/cell in log phase SD medium.</text>
</comment>
<comment type="similarity">
    <text evidence="8">Belongs to the BCAP29/BCAP31 family.</text>
</comment>